<organism>
    <name type="scientific">Renibacterium salmoninarum (strain ATCC 33209 / DSM 20767 / JCM 11484 / NBRC 15589 / NCIMB 2235)</name>
    <dbReference type="NCBI Taxonomy" id="288705"/>
    <lineage>
        <taxon>Bacteria</taxon>
        <taxon>Bacillati</taxon>
        <taxon>Actinomycetota</taxon>
        <taxon>Actinomycetes</taxon>
        <taxon>Micrococcales</taxon>
        <taxon>Micrococcaceae</taxon>
        <taxon>Renibacterium</taxon>
    </lineage>
</organism>
<reference key="1">
    <citation type="journal article" date="2008" name="J. Bacteriol.">
        <title>Genome sequence of the fish pathogen Renibacterium salmoninarum suggests reductive evolution away from an environmental Arthrobacter ancestor.</title>
        <authorList>
            <person name="Wiens G.D."/>
            <person name="Rockey D.D."/>
            <person name="Wu Z."/>
            <person name="Chang J."/>
            <person name="Levy R."/>
            <person name="Crane S."/>
            <person name="Chen D.S."/>
            <person name="Capri G.R."/>
            <person name="Burnett J.R."/>
            <person name="Sudheesh P.S."/>
            <person name="Schipma M.J."/>
            <person name="Burd H."/>
            <person name="Bhattacharyya A."/>
            <person name="Rhodes L.D."/>
            <person name="Kaul R."/>
            <person name="Strom M.S."/>
        </authorList>
    </citation>
    <scope>NUCLEOTIDE SEQUENCE [LARGE SCALE GENOMIC DNA]</scope>
    <source>
        <strain>ATCC 33209 / DSM 20767 / JCM 11484 / NBRC 15589 / NCIMB 2235</strain>
    </source>
</reference>
<proteinExistence type="inferred from homology"/>
<protein>
    <recommendedName>
        <fullName evidence="1">Imidazole glycerol phosphate synthase subunit HisF</fullName>
        <ecNumber evidence="1">4.3.2.10</ecNumber>
    </recommendedName>
    <alternativeName>
        <fullName evidence="1">IGP synthase cyclase subunit</fullName>
    </alternativeName>
    <alternativeName>
        <fullName evidence="1">IGP synthase subunit HisF</fullName>
    </alternativeName>
    <alternativeName>
        <fullName evidence="1">ImGP synthase subunit HisF</fullName>
        <shortName evidence="1">IGPS subunit HisF</shortName>
    </alternativeName>
</protein>
<dbReference type="EC" id="4.3.2.10" evidence="1"/>
<dbReference type="EMBL" id="CP000910">
    <property type="protein sequence ID" value="ABY24071.1"/>
    <property type="molecule type" value="Genomic_DNA"/>
</dbReference>
<dbReference type="RefSeq" id="WP_012245734.1">
    <property type="nucleotide sequence ID" value="NC_010168.1"/>
</dbReference>
<dbReference type="SMR" id="A9WR62"/>
<dbReference type="STRING" id="288705.RSal33209_2341"/>
<dbReference type="KEGG" id="rsa:RSal33209_2341"/>
<dbReference type="eggNOG" id="COG0107">
    <property type="taxonomic scope" value="Bacteria"/>
</dbReference>
<dbReference type="HOGENOM" id="CLU_048577_4_0_11"/>
<dbReference type="UniPathway" id="UPA00031">
    <property type="reaction ID" value="UER00010"/>
</dbReference>
<dbReference type="Proteomes" id="UP000002007">
    <property type="component" value="Chromosome"/>
</dbReference>
<dbReference type="GO" id="GO:0005737">
    <property type="term" value="C:cytoplasm"/>
    <property type="evidence" value="ECO:0007669"/>
    <property type="project" value="UniProtKB-SubCell"/>
</dbReference>
<dbReference type="GO" id="GO:0000107">
    <property type="term" value="F:imidazoleglycerol-phosphate synthase activity"/>
    <property type="evidence" value="ECO:0007669"/>
    <property type="project" value="UniProtKB-UniRule"/>
</dbReference>
<dbReference type="GO" id="GO:0016829">
    <property type="term" value="F:lyase activity"/>
    <property type="evidence" value="ECO:0007669"/>
    <property type="project" value="UniProtKB-KW"/>
</dbReference>
<dbReference type="GO" id="GO:0000105">
    <property type="term" value="P:L-histidine biosynthetic process"/>
    <property type="evidence" value="ECO:0007669"/>
    <property type="project" value="UniProtKB-UniRule"/>
</dbReference>
<dbReference type="CDD" id="cd04731">
    <property type="entry name" value="HisF"/>
    <property type="match status" value="1"/>
</dbReference>
<dbReference type="Gene3D" id="3.20.20.70">
    <property type="entry name" value="Aldolase class I"/>
    <property type="match status" value="1"/>
</dbReference>
<dbReference type="HAMAP" id="MF_01013">
    <property type="entry name" value="HisF"/>
    <property type="match status" value="1"/>
</dbReference>
<dbReference type="InterPro" id="IPR013785">
    <property type="entry name" value="Aldolase_TIM"/>
</dbReference>
<dbReference type="InterPro" id="IPR006062">
    <property type="entry name" value="His_biosynth"/>
</dbReference>
<dbReference type="InterPro" id="IPR004651">
    <property type="entry name" value="HisF"/>
</dbReference>
<dbReference type="InterPro" id="IPR050064">
    <property type="entry name" value="IGPS_HisA/HisF"/>
</dbReference>
<dbReference type="InterPro" id="IPR011060">
    <property type="entry name" value="RibuloseP-bd_barrel"/>
</dbReference>
<dbReference type="NCBIfam" id="TIGR00735">
    <property type="entry name" value="hisF"/>
    <property type="match status" value="1"/>
</dbReference>
<dbReference type="PANTHER" id="PTHR21235:SF2">
    <property type="entry name" value="IMIDAZOLE GLYCEROL PHOSPHATE SYNTHASE HISHF"/>
    <property type="match status" value="1"/>
</dbReference>
<dbReference type="PANTHER" id="PTHR21235">
    <property type="entry name" value="IMIDAZOLE GLYCEROL PHOSPHATE SYNTHASE SUBUNIT HISF/H IGP SYNTHASE SUBUNIT HISF/H"/>
    <property type="match status" value="1"/>
</dbReference>
<dbReference type="Pfam" id="PF00977">
    <property type="entry name" value="His_biosynth"/>
    <property type="match status" value="1"/>
</dbReference>
<dbReference type="SUPFAM" id="SSF51366">
    <property type="entry name" value="Ribulose-phoshate binding barrel"/>
    <property type="match status" value="1"/>
</dbReference>
<gene>
    <name evidence="1" type="primary">hisF</name>
    <name type="ordered locus">RSal33209_2341</name>
</gene>
<feature type="chain" id="PRO_1000084073" description="Imidazole glycerol phosphate synthase subunit HisF">
    <location>
        <begin position="1"/>
        <end position="256"/>
    </location>
</feature>
<feature type="active site" evidence="1">
    <location>
        <position position="12"/>
    </location>
</feature>
<feature type="active site" evidence="1">
    <location>
        <position position="131"/>
    </location>
</feature>
<sequence length="256" mass="26626">MSVAIRVIPCLDVDAGRVVKGVNFADLRDAGDPVELARRYDGAGADELTFLDVTATSGNRETTFEMVARAAEEVFIPLTVGGGVREVADVDRLLRAGADKASINSAAVARPEVIDEITRHFGSQVLVLSLDARRVADGSTPSGFEVTTHGGRRGTGIDAVLWAREAADRGVGEILLNSIDADGTKAGFDLEMIRAVRAAVRVPLIASGGAGKPEDFPPAVQAGADAVLAASIFHFGPVDAIAQVKAAIRAAGFPVR</sequence>
<keyword id="KW-0028">Amino-acid biosynthesis</keyword>
<keyword id="KW-0963">Cytoplasm</keyword>
<keyword id="KW-0368">Histidine biosynthesis</keyword>
<keyword id="KW-0456">Lyase</keyword>
<keyword id="KW-1185">Reference proteome</keyword>
<accession>A9WR62</accession>
<evidence type="ECO:0000255" key="1">
    <source>
        <dbReference type="HAMAP-Rule" id="MF_01013"/>
    </source>
</evidence>
<name>HIS6_RENSM</name>
<comment type="function">
    <text evidence="1">IGPS catalyzes the conversion of PRFAR and glutamine to IGP, AICAR and glutamate. The HisF subunit catalyzes the cyclization activity that produces IGP and AICAR from PRFAR using the ammonia provided by the HisH subunit.</text>
</comment>
<comment type="catalytic activity">
    <reaction evidence="1">
        <text>5-[(5-phospho-1-deoxy-D-ribulos-1-ylimino)methylamino]-1-(5-phospho-beta-D-ribosyl)imidazole-4-carboxamide + L-glutamine = D-erythro-1-(imidazol-4-yl)glycerol 3-phosphate + 5-amino-1-(5-phospho-beta-D-ribosyl)imidazole-4-carboxamide + L-glutamate + H(+)</text>
        <dbReference type="Rhea" id="RHEA:24793"/>
        <dbReference type="ChEBI" id="CHEBI:15378"/>
        <dbReference type="ChEBI" id="CHEBI:29985"/>
        <dbReference type="ChEBI" id="CHEBI:58278"/>
        <dbReference type="ChEBI" id="CHEBI:58359"/>
        <dbReference type="ChEBI" id="CHEBI:58475"/>
        <dbReference type="ChEBI" id="CHEBI:58525"/>
        <dbReference type="EC" id="4.3.2.10"/>
    </reaction>
</comment>
<comment type="pathway">
    <text evidence="1">Amino-acid biosynthesis; L-histidine biosynthesis; L-histidine from 5-phospho-alpha-D-ribose 1-diphosphate: step 5/9.</text>
</comment>
<comment type="subunit">
    <text evidence="1">Heterodimer of HisH and HisF.</text>
</comment>
<comment type="subcellular location">
    <subcellularLocation>
        <location evidence="1">Cytoplasm</location>
    </subcellularLocation>
</comment>
<comment type="similarity">
    <text evidence="1">Belongs to the HisA/HisF family.</text>
</comment>